<accession>Q1CA31</accession>
<gene>
    <name evidence="1" type="primary">fabA</name>
    <name type="ordered locus">YPA_0723</name>
</gene>
<reference key="1">
    <citation type="journal article" date="2006" name="J. Bacteriol.">
        <title>Complete genome sequence of Yersinia pestis strains Antiqua and Nepal516: evidence of gene reduction in an emerging pathogen.</title>
        <authorList>
            <person name="Chain P.S.G."/>
            <person name="Hu P."/>
            <person name="Malfatti S.A."/>
            <person name="Radnedge L."/>
            <person name="Larimer F."/>
            <person name="Vergez L.M."/>
            <person name="Worsham P."/>
            <person name="Chu M.C."/>
            <person name="Andersen G.L."/>
        </authorList>
    </citation>
    <scope>NUCLEOTIDE SEQUENCE [LARGE SCALE GENOMIC DNA]</scope>
    <source>
        <strain>Antiqua</strain>
    </source>
</reference>
<sequence length="172" mass="18810">MVDKRESYTKEDLEASGRGELFGAGGPPLPAGNMLMMDRIVKMIEDGGSHNKGYVEAELDINPDLWFFGCHFIGDPVMPGCLGLDAMWQLVGFYLGWLGGEGKGRALGVGEVKFTGQVLPDAKKVTYRINFKRVIMRKLIMGVADGEVLVDGKVIYTATDLKVGLFKDTNAF</sequence>
<name>FABA_YERPA</name>
<dbReference type="EC" id="4.2.1.59" evidence="1"/>
<dbReference type="EC" id="5.3.3.14" evidence="1"/>
<dbReference type="EMBL" id="CP000308">
    <property type="protein sequence ID" value="ABG12691.1"/>
    <property type="status" value="ALT_INIT"/>
    <property type="molecule type" value="Genomic_DNA"/>
</dbReference>
<dbReference type="RefSeq" id="WP_002220006.1">
    <property type="nucleotide sequence ID" value="NZ_CP009906.1"/>
</dbReference>
<dbReference type="SMR" id="Q1CA31"/>
<dbReference type="GeneID" id="57977132"/>
<dbReference type="KEGG" id="ypa:YPA_0723"/>
<dbReference type="UniPathway" id="UPA00094"/>
<dbReference type="Proteomes" id="UP000001971">
    <property type="component" value="Chromosome"/>
</dbReference>
<dbReference type="GO" id="GO:0005737">
    <property type="term" value="C:cytoplasm"/>
    <property type="evidence" value="ECO:0007669"/>
    <property type="project" value="UniProtKB-SubCell"/>
</dbReference>
<dbReference type="GO" id="GO:0019171">
    <property type="term" value="F:(3R)-hydroxyacyl-[acyl-carrier-protein] dehydratase activity"/>
    <property type="evidence" value="ECO:0007669"/>
    <property type="project" value="UniProtKB-UniRule"/>
</dbReference>
<dbReference type="GO" id="GO:0034017">
    <property type="term" value="F:trans-2-decenoyl-acyl-carrier-protein isomerase activity"/>
    <property type="evidence" value="ECO:0007669"/>
    <property type="project" value="UniProtKB-UniRule"/>
</dbReference>
<dbReference type="GO" id="GO:0006636">
    <property type="term" value="P:unsaturated fatty acid biosynthetic process"/>
    <property type="evidence" value="ECO:0007669"/>
    <property type="project" value="UniProtKB-UniRule"/>
</dbReference>
<dbReference type="CDD" id="cd01287">
    <property type="entry name" value="FabA"/>
    <property type="match status" value="1"/>
</dbReference>
<dbReference type="FunFam" id="3.10.129.10:FF:000003">
    <property type="entry name" value="3-hydroxydecanoyl-[acyl-carrier-protein] dehydratase"/>
    <property type="match status" value="1"/>
</dbReference>
<dbReference type="Gene3D" id="3.10.129.10">
    <property type="entry name" value="Hotdog Thioesterase"/>
    <property type="match status" value="1"/>
</dbReference>
<dbReference type="HAMAP" id="MF_00405">
    <property type="entry name" value="FabA"/>
    <property type="match status" value="1"/>
</dbReference>
<dbReference type="InterPro" id="IPR010083">
    <property type="entry name" value="FabA"/>
</dbReference>
<dbReference type="InterPro" id="IPR013114">
    <property type="entry name" value="FabA_FabZ"/>
</dbReference>
<dbReference type="InterPro" id="IPR029069">
    <property type="entry name" value="HotDog_dom_sf"/>
</dbReference>
<dbReference type="NCBIfam" id="TIGR01749">
    <property type="entry name" value="fabA"/>
    <property type="match status" value="1"/>
</dbReference>
<dbReference type="NCBIfam" id="NF003509">
    <property type="entry name" value="PRK05174.1"/>
    <property type="match status" value="1"/>
</dbReference>
<dbReference type="PANTHER" id="PTHR30272">
    <property type="entry name" value="3-HYDROXYACYL-[ACYL-CARRIER-PROTEIN] DEHYDRATASE"/>
    <property type="match status" value="1"/>
</dbReference>
<dbReference type="PANTHER" id="PTHR30272:SF8">
    <property type="entry name" value="3-HYDROXYDECANOYL-[ACYL-CARRIER-PROTEIN] DEHYDRATASE"/>
    <property type="match status" value="1"/>
</dbReference>
<dbReference type="Pfam" id="PF07977">
    <property type="entry name" value="FabA"/>
    <property type="match status" value="1"/>
</dbReference>
<dbReference type="SUPFAM" id="SSF54637">
    <property type="entry name" value="Thioesterase/thiol ester dehydrase-isomerase"/>
    <property type="match status" value="1"/>
</dbReference>
<protein>
    <recommendedName>
        <fullName evidence="1">3-hydroxydecanoyl-[acyl-carrier-protein] dehydratase</fullName>
        <ecNumber evidence="1">4.2.1.59</ecNumber>
    </recommendedName>
    <alternativeName>
        <fullName evidence="1">3-hydroxyacyl-[acyl-carrier-protein] dehydratase FabA</fullName>
    </alternativeName>
    <alternativeName>
        <fullName evidence="1">Beta-hydroxydecanoyl thioester dehydrase</fullName>
    </alternativeName>
    <alternativeName>
        <fullName evidence="1">Trans-2-decenoyl-[acyl-carrier-protein] isomerase</fullName>
        <ecNumber evidence="1">5.3.3.14</ecNumber>
    </alternativeName>
</protein>
<keyword id="KW-0963">Cytoplasm</keyword>
<keyword id="KW-0275">Fatty acid biosynthesis</keyword>
<keyword id="KW-0276">Fatty acid metabolism</keyword>
<keyword id="KW-0413">Isomerase</keyword>
<keyword id="KW-0444">Lipid biosynthesis</keyword>
<keyword id="KW-0443">Lipid metabolism</keyword>
<keyword id="KW-0456">Lyase</keyword>
<feature type="chain" id="PRO_0000267764" description="3-hydroxydecanoyl-[acyl-carrier-protein] dehydratase">
    <location>
        <begin position="1"/>
        <end position="172"/>
    </location>
</feature>
<feature type="active site" evidence="1">
    <location>
        <position position="71"/>
    </location>
</feature>
<comment type="function">
    <text evidence="1">Necessary for the introduction of cis unsaturation into fatty acids. Catalyzes the dehydration of (3R)-3-hydroxydecanoyl-ACP to E-(2)-decenoyl-ACP and then its isomerization to Z-(3)-decenoyl-ACP. Can catalyze the dehydratase reaction for beta-hydroxyacyl-ACPs with saturated chain lengths up to 16:0, being most active on intermediate chain length.</text>
</comment>
<comment type="catalytic activity">
    <reaction evidence="1">
        <text>a (3R)-hydroxyacyl-[ACP] = a (2E)-enoyl-[ACP] + H2O</text>
        <dbReference type="Rhea" id="RHEA:13097"/>
        <dbReference type="Rhea" id="RHEA-COMP:9925"/>
        <dbReference type="Rhea" id="RHEA-COMP:9945"/>
        <dbReference type="ChEBI" id="CHEBI:15377"/>
        <dbReference type="ChEBI" id="CHEBI:78784"/>
        <dbReference type="ChEBI" id="CHEBI:78827"/>
        <dbReference type="EC" id="4.2.1.59"/>
    </reaction>
</comment>
<comment type="catalytic activity">
    <reaction evidence="1">
        <text>(3R)-hydroxydecanoyl-[ACP] = (2E)-decenoyl-[ACP] + H2O</text>
        <dbReference type="Rhea" id="RHEA:41860"/>
        <dbReference type="Rhea" id="RHEA-COMP:9638"/>
        <dbReference type="Rhea" id="RHEA-COMP:9639"/>
        <dbReference type="ChEBI" id="CHEBI:15377"/>
        <dbReference type="ChEBI" id="CHEBI:78466"/>
        <dbReference type="ChEBI" id="CHEBI:78467"/>
    </reaction>
</comment>
<comment type="catalytic activity">
    <reaction evidence="1">
        <text>(2E)-decenoyl-[ACP] = (3Z)-decenoyl-[ACP]</text>
        <dbReference type="Rhea" id="RHEA:23568"/>
        <dbReference type="Rhea" id="RHEA-COMP:9639"/>
        <dbReference type="Rhea" id="RHEA-COMP:9927"/>
        <dbReference type="ChEBI" id="CHEBI:78467"/>
        <dbReference type="ChEBI" id="CHEBI:78798"/>
        <dbReference type="EC" id="5.3.3.14"/>
    </reaction>
</comment>
<comment type="pathway">
    <text evidence="1">Lipid metabolism; fatty acid biosynthesis.</text>
</comment>
<comment type="subunit">
    <text evidence="1">Homodimer.</text>
</comment>
<comment type="subcellular location">
    <subcellularLocation>
        <location evidence="1">Cytoplasm</location>
    </subcellularLocation>
</comment>
<comment type="similarity">
    <text evidence="1">Belongs to the thioester dehydratase family. FabA subfamily.</text>
</comment>
<comment type="sequence caution" evidence="2">
    <conflict type="erroneous initiation">
        <sequence resource="EMBL-CDS" id="ABG12691"/>
    </conflict>
</comment>
<evidence type="ECO:0000255" key="1">
    <source>
        <dbReference type="HAMAP-Rule" id="MF_00405"/>
    </source>
</evidence>
<evidence type="ECO:0000305" key="2"/>
<proteinExistence type="inferred from homology"/>
<organism>
    <name type="scientific">Yersinia pestis bv. Antiqua (strain Antiqua)</name>
    <dbReference type="NCBI Taxonomy" id="360102"/>
    <lineage>
        <taxon>Bacteria</taxon>
        <taxon>Pseudomonadati</taxon>
        <taxon>Pseudomonadota</taxon>
        <taxon>Gammaproteobacteria</taxon>
        <taxon>Enterobacterales</taxon>
        <taxon>Yersiniaceae</taxon>
        <taxon>Yersinia</taxon>
    </lineage>
</organism>